<reference key="1">
    <citation type="journal article" date="2004" name="Proc. Natl. Acad. Sci. U.S.A.">
        <title>Insights into the evolution of Yersinia pestis through whole-genome comparison with Yersinia pseudotuberculosis.</title>
        <authorList>
            <person name="Chain P.S.G."/>
            <person name="Carniel E."/>
            <person name="Larimer F.W."/>
            <person name="Lamerdin J."/>
            <person name="Stoutland P.O."/>
            <person name="Regala W.M."/>
            <person name="Georgescu A.M."/>
            <person name="Vergez L.M."/>
            <person name="Land M.L."/>
            <person name="Motin V.L."/>
            <person name="Brubaker R.R."/>
            <person name="Fowler J."/>
            <person name="Hinnebusch J."/>
            <person name="Marceau M."/>
            <person name="Medigue C."/>
            <person name="Simonet M."/>
            <person name="Chenal-Francisque V."/>
            <person name="Souza B."/>
            <person name="Dacheux D."/>
            <person name="Elliott J.M."/>
            <person name="Derbise A."/>
            <person name="Hauser L.J."/>
            <person name="Garcia E."/>
        </authorList>
    </citation>
    <scope>NUCLEOTIDE SEQUENCE [LARGE SCALE GENOMIC DNA]</scope>
    <source>
        <strain>IP32953</strain>
    </source>
</reference>
<sequence length="245" mass="26281">MKIDLNADLGEGCANDQALLQLVSSANIACGFHAGDAQTMRQSVRWALEYGVAIGAHPSFPDRENFGRTAMQLPPETVYAQVVYQLGALAAIVQVEGGVMQHVKPHGMLYNQAAVDPLLADAIAQAVKAVDPSLRLVGLAGSELIRAGTRVGLVTRQEVFADRHYQPDGTLVPRSQPDALIESDELALSQTLAMVQQHQVQACDGSWVQVQADTVCVHGDGVQALAFARCLRDRFQQEGISVIAQ</sequence>
<evidence type="ECO:0000255" key="1">
    <source>
        <dbReference type="HAMAP-Rule" id="MF_00691"/>
    </source>
</evidence>
<evidence type="ECO:0000305" key="2"/>
<gene>
    <name evidence="1" type="primary">pxpA</name>
    <name type="ordered locus">YPTB2908</name>
</gene>
<dbReference type="EC" id="3.5.2.9" evidence="1"/>
<dbReference type="EMBL" id="BX936398">
    <property type="protein sequence ID" value="CAH22146.1"/>
    <property type="status" value="ALT_INIT"/>
    <property type="molecule type" value="Genomic_DNA"/>
</dbReference>
<dbReference type="RefSeq" id="WP_002209659.1">
    <property type="nucleotide sequence ID" value="NZ_CP009712.1"/>
</dbReference>
<dbReference type="SMR" id="Q667T3"/>
<dbReference type="GeneID" id="57975991"/>
<dbReference type="KEGG" id="ypo:BZ17_3721"/>
<dbReference type="KEGG" id="yps:YPTB2908"/>
<dbReference type="PATRIC" id="fig|273123.14.peg.3904"/>
<dbReference type="Proteomes" id="UP000001011">
    <property type="component" value="Chromosome"/>
</dbReference>
<dbReference type="GO" id="GO:0017168">
    <property type="term" value="F:5-oxoprolinase (ATP-hydrolyzing) activity"/>
    <property type="evidence" value="ECO:0007669"/>
    <property type="project" value="UniProtKB-UniRule"/>
</dbReference>
<dbReference type="GO" id="GO:0005524">
    <property type="term" value="F:ATP binding"/>
    <property type="evidence" value="ECO:0007669"/>
    <property type="project" value="UniProtKB-UniRule"/>
</dbReference>
<dbReference type="GO" id="GO:0005975">
    <property type="term" value="P:carbohydrate metabolic process"/>
    <property type="evidence" value="ECO:0007669"/>
    <property type="project" value="InterPro"/>
</dbReference>
<dbReference type="CDD" id="cd10800">
    <property type="entry name" value="LamB_YcsF_YbgL_like"/>
    <property type="match status" value="1"/>
</dbReference>
<dbReference type="Gene3D" id="3.20.20.370">
    <property type="entry name" value="Glycoside hydrolase/deacetylase"/>
    <property type="match status" value="1"/>
</dbReference>
<dbReference type="HAMAP" id="MF_00691">
    <property type="entry name" value="PxpA"/>
    <property type="match status" value="1"/>
</dbReference>
<dbReference type="InterPro" id="IPR011330">
    <property type="entry name" value="Glyco_hydro/deAcase_b/a-brl"/>
</dbReference>
<dbReference type="InterPro" id="IPR005501">
    <property type="entry name" value="LamB/YcsF/PxpA-like"/>
</dbReference>
<dbReference type="NCBIfam" id="NF003812">
    <property type="entry name" value="PRK05406.1-1"/>
    <property type="match status" value="1"/>
</dbReference>
<dbReference type="NCBIfam" id="NF003814">
    <property type="entry name" value="PRK05406.1-3"/>
    <property type="match status" value="1"/>
</dbReference>
<dbReference type="NCBIfam" id="NF003815">
    <property type="entry name" value="PRK05406.1-4"/>
    <property type="match status" value="1"/>
</dbReference>
<dbReference type="NCBIfam" id="NF003816">
    <property type="entry name" value="PRK05406.1-5"/>
    <property type="match status" value="1"/>
</dbReference>
<dbReference type="PANTHER" id="PTHR30292:SF0">
    <property type="entry name" value="5-OXOPROLINASE SUBUNIT A"/>
    <property type="match status" value="1"/>
</dbReference>
<dbReference type="PANTHER" id="PTHR30292">
    <property type="entry name" value="UNCHARACTERIZED PROTEIN YBGL-RELATED"/>
    <property type="match status" value="1"/>
</dbReference>
<dbReference type="Pfam" id="PF03746">
    <property type="entry name" value="LamB_YcsF"/>
    <property type="match status" value="1"/>
</dbReference>
<dbReference type="SUPFAM" id="SSF88713">
    <property type="entry name" value="Glycoside hydrolase/deacetylase"/>
    <property type="match status" value="1"/>
</dbReference>
<organism>
    <name type="scientific">Yersinia pseudotuberculosis serotype I (strain IP32953)</name>
    <dbReference type="NCBI Taxonomy" id="273123"/>
    <lineage>
        <taxon>Bacteria</taxon>
        <taxon>Pseudomonadati</taxon>
        <taxon>Pseudomonadota</taxon>
        <taxon>Gammaproteobacteria</taxon>
        <taxon>Enterobacterales</taxon>
        <taxon>Yersiniaceae</taxon>
        <taxon>Yersinia</taxon>
    </lineage>
</organism>
<accession>Q667T3</accession>
<proteinExistence type="inferred from homology"/>
<feature type="chain" id="PRO_0000185063" description="5-oxoprolinase subunit A">
    <location>
        <begin position="1"/>
        <end position="245"/>
    </location>
</feature>
<comment type="function">
    <text evidence="1">Catalyzes the cleavage of 5-oxoproline to form L-glutamate coupled to the hydrolysis of ATP to ADP and inorganic phosphate.</text>
</comment>
<comment type="catalytic activity">
    <reaction evidence="1">
        <text>5-oxo-L-proline + ATP + 2 H2O = L-glutamate + ADP + phosphate + H(+)</text>
        <dbReference type="Rhea" id="RHEA:10348"/>
        <dbReference type="ChEBI" id="CHEBI:15377"/>
        <dbReference type="ChEBI" id="CHEBI:15378"/>
        <dbReference type="ChEBI" id="CHEBI:29985"/>
        <dbReference type="ChEBI" id="CHEBI:30616"/>
        <dbReference type="ChEBI" id="CHEBI:43474"/>
        <dbReference type="ChEBI" id="CHEBI:58402"/>
        <dbReference type="ChEBI" id="CHEBI:456216"/>
        <dbReference type="EC" id="3.5.2.9"/>
    </reaction>
</comment>
<comment type="subunit">
    <text evidence="1">Forms a complex composed of PxpA, PxpB and PxpC.</text>
</comment>
<comment type="similarity">
    <text evidence="1">Belongs to the LamB/PxpA family.</text>
</comment>
<comment type="sequence caution" evidence="2">
    <conflict type="erroneous initiation">
        <sequence resource="EMBL-CDS" id="CAH22146"/>
    </conflict>
</comment>
<keyword id="KW-0067">ATP-binding</keyword>
<keyword id="KW-0378">Hydrolase</keyword>
<keyword id="KW-0547">Nucleotide-binding</keyword>
<protein>
    <recommendedName>
        <fullName evidence="1">5-oxoprolinase subunit A</fullName>
        <shortName evidence="1">5-OPase subunit A</shortName>
        <ecNumber evidence="1">3.5.2.9</ecNumber>
    </recommendedName>
    <alternativeName>
        <fullName evidence="1">5-oxoprolinase (ATP-hydrolyzing) subunit A</fullName>
    </alternativeName>
</protein>
<name>PXPA_YERPS</name>